<evidence type="ECO:0000255" key="1">
    <source>
        <dbReference type="PROSITE-ProRule" id="PRU00037"/>
    </source>
</evidence>
<evidence type="ECO:0000305" key="2"/>
<accession>Q776A6</accession>
<comment type="similarity">
    <text evidence="2">Belongs to the poxviruses Kelch family.</text>
</comment>
<organism>
    <name type="scientific">Camelpox virus (strain CMS)</name>
    <dbReference type="NCBI Taxonomy" id="203172"/>
    <lineage>
        <taxon>Viruses</taxon>
        <taxon>Varidnaviria</taxon>
        <taxon>Bamfordvirae</taxon>
        <taxon>Nucleocytoviricota</taxon>
        <taxon>Pokkesviricetes</taxon>
        <taxon>Chitovirales</taxon>
        <taxon>Poxviridae</taxon>
        <taxon>Chordopoxvirinae</taxon>
        <taxon>Orthopoxvirus</taxon>
        <taxon>Camelpox virus</taxon>
    </lineage>
</organism>
<feature type="chain" id="PRO_0000119161" description="Kelch repeat protein C2">
    <location>
        <begin position="1"/>
        <end position="512"/>
    </location>
</feature>
<feature type="domain" description="BTB" evidence="1">
    <location>
        <begin position="2"/>
        <end position="67"/>
    </location>
</feature>
<feature type="domain" description="BACK">
    <location>
        <begin position="102"/>
        <end position="176"/>
    </location>
</feature>
<feature type="repeat" description="Kelch 1">
    <location>
        <begin position="216"/>
        <end position="261"/>
    </location>
</feature>
<feature type="repeat" description="Kelch 2">
    <location>
        <begin position="262"/>
        <end position="307"/>
    </location>
</feature>
<feature type="repeat" description="Kelch 3">
    <location>
        <begin position="309"/>
        <end position="354"/>
    </location>
</feature>
<feature type="repeat" description="Kelch 4">
    <location>
        <begin position="356"/>
        <end position="403"/>
    </location>
</feature>
<feature type="repeat" description="Kelch 5">
    <location>
        <begin position="405"/>
        <end position="449"/>
    </location>
</feature>
<feature type="repeat" description="Kelch 6">
    <location>
        <begin position="452"/>
        <end position="498"/>
    </location>
</feature>
<proteinExistence type="inferred from homology"/>
<keyword id="KW-0880">Kelch repeat</keyword>
<keyword id="KW-1185">Reference proteome</keyword>
<keyword id="KW-0677">Repeat</keyword>
<organismHost>
    <name type="scientific">Camelus</name>
    <dbReference type="NCBI Taxonomy" id="9836"/>
</organismHost>
<gene>
    <name type="ordered locus">CMP24L</name>
</gene>
<reference key="1">
    <citation type="journal article" date="2002" name="J. Gen. Virol.">
        <title>The sequence of camelpox virus shows it is most closely related to variola virus, the cause of smallpox.</title>
        <authorList>
            <person name="Gubser C."/>
            <person name="Smith G.L."/>
        </authorList>
    </citation>
    <scope>NUCLEOTIDE SEQUENCE [LARGE SCALE GENOMIC DNA]</scope>
</reference>
<sequence>MESVIFSINGEIIQVNKEIITASPYNFFKRIQEHHINDEAIILNGINYHAFESLLDYMRWKKINITVNNVEMILVAAVIIDIPPVVDLCVKTMIHNINSTNCIRMFNFSKRYGIKKLYNASMLEIINNITAVTSDPEFGKLSKDELTTILSHENVNVNHEDVTAMILLKWIHKNPNDVDIINILHPKFMTNTMCNAISLLGLTISKSTKPVTRNGIKHNIVVIKNSDYISTITHYSPRTEYWTIVGNTDRQFYNANVLYNCLYIIGGMINNRHVYSVSRVDLKTKKWKTVTNMSSLKSEVSTCVNDGKLYVIGGLEFSISTGVAEYLKHGTSKWIRLPNLITPRYSGASVFVNDDIYVMGGVYTTYEKYVVLNDVECFTKNRWIKKSPMPRHHSIVYAIEYDGDIYAITGITHETRNYLYKYIVKEDKWIELYMYFNHVGKMFVCSCGDYILIIADAKYEYYPKSNTWILFDMSTRNIEYYDMFTKDETPKCNVTHKSLPSFLSNCEKQFLQ</sequence>
<dbReference type="EMBL" id="AY009089">
    <property type="protein sequence ID" value="AAG37480.1"/>
    <property type="molecule type" value="Genomic_DNA"/>
</dbReference>
<dbReference type="SMR" id="Q776A6"/>
<dbReference type="Proteomes" id="UP000107153">
    <property type="component" value="Genome"/>
</dbReference>
<dbReference type="Gene3D" id="1.25.40.420">
    <property type="match status" value="1"/>
</dbReference>
<dbReference type="Gene3D" id="2.120.10.80">
    <property type="entry name" value="Kelch-type beta propeller"/>
    <property type="match status" value="1"/>
</dbReference>
<dbReference type="Gene3D" id="3.30.710.10">
    <property type="entry name" value="Potassium Channel Kv1.1, Chain A"/>
    <property type="match status" value="1"/>
</dbReference>
<dbReference type="InterPro" id="IPR011705">
    <property type="entry name" value="BACK"/>
</dbReference>
<dbReference type="InterPro" id="IPR000210">
    <property type="entry name" value="BTB/POZ_dom"/>
</dbReference>
<dbReference type="InterPro" id="IPR015915">
    <property type="entry name" value="Kelch-typ_b-propeller"/>
</dbReference>
<dbReference type="InterPro" id="IPR006652">
    <property type="entry name" value="Kelch_1"/>
</dbReference>
<dbReference type="InterPro" id="IPR011333">
    <property type="entry name" value="SKP1/BTB/POZ_sf"/>
</dbReference>
<dbReference type="PANTHER" id="PTHR24412">
    <property type="entry name" value="KELCH PROTEIN"/>
    <property type="match status" value="1"/>
</dbReference>
<dbReference type="PANTHER" id="PTHR24412:SF480">
    <property type="entry name" value="KELCH-LIKE PROTEIN 8"/>
    <property type="match status" value="1"/>
</dbReference>
<dbReference type="Pfam" id="PF07707">
    <property type="entry name" value="BACK"/>
    <property type="match status" value="1"/>
</dbReference>
<dbReference type="Pfam" id="PF00651">
    <property type="entry name" value="BTB"/>
    <property type="match status" value="1"/>
</dbReference>
<dbReference type="Pfam" id="PF01344">
    <property type="entry name" value="Kelch_1"/>
    <property type="match status" value="3"/>
</dbReference>
<dbReference type="SMART" id="SM00875">
    <property type="entry name" value="BACK"/>
    <property type="match status" value="1"/>
</dbReference>
<dbReference type="SMART" id="SM00225">
    <property type="entry name" value="BTB"/>
    <property type="match status" value="1"/>
</dbReference>
<dbReference type="SMART" id="SM00612">
    <property type="entry name" value="Kelch"/>
    <property type="match status" value="3"/>
</dbReference>
<dbReference type="SUPFAM" id="SSF117281">
    <property type="entry name" value="Kelch motif"/>
    <property type="match status" value="1"/>
</dbReference>
<dbReference type="SUPFAM" id="SSF54695">
    <property type="entry name" value="POZ domain"/>
    <property type="match status" value="1"/>
</dbReference>
<dbReference type="PROSITE" id="PS50097">
    <property type="entry name" value="BTB"/>
    <property type="match status" value="1"/>
</dbReference>
<protein>
    <recommendedName>
        <fullName>Kelch repeat protein C2</fullName>
    </recommendedName>
</protein>
<name>C2_CAMPS</name>